<keyword id="KW-0997">Cell inner membrane</keyword>
<keyword id="KW-1003">Cell membrane</keyword>
<keyword id="KW-0472">Membrane</keyword>
<keyword id="KW-1185">Reference proteome</keyword>
<keyword id="KW-0812">Transmembrane</keyword>
<keyword id="KW-1133">Transmembrane helix</keyword>
<keyword id="KW-0813">Transport</keyword>
<feature type="chain" id="PRO_0000169187" description="Probable membrane transporter protein YfcA">
    <location>
        <begin position="1"/>
        <end position="269"/>
    </location>
</feature>
<feature type="topological domain" description="Periplasmic" evidence="1">
    <location>
        <begin position="1"/>
        <end position="7"/>
    </location>
</feature>
<feature type="transmembrane region" description="Helical" evidence="1">
    <location>
        <begin position="8"/>
        <end position="28"/>
    </location>
</feature>
<feature type="topological domain" description="Cytoplasmic" evidence="1">
    <location>
        <begin position="29"/>
        <end position="30"/>
    </location>
</feature>
<feature type="transmembrane region" description="Helical" evidence="1">
    <location>
        <begin position="31"/>
        <end position="51"/>
    </location>
</feature>
<feature type="topological domain" description="Periplasmic" evidence="1">
    <location>
        <begin position="52"/>
        <end position="84"/>
    </location>
</feature>
<feature type="transmembrane region" description="Helical" evidence="1">
    <location>
        <begin position="85"/>
        <end position="105"/>
    </location>
</feature>
<feature type="topological domain" description="Cytoplasmic" evidence="1">
    <location>
        <begin position="106"/>
        <end position="111"/>
    </location>
</feature>
<feature type="transmembrane region" description="Helical" evidence="1">
    <location>
        <begin position="112"/>
        <end position="132"/>
    </location>
</feature>
<feature type="topological domain" description="Periplasmic" evidence="1">
    <location>
        <begin position="133"/>
        <end position="156"/>
    </location>
</feature>
<feature type="transmembrane region" description="Helical" evidence="1">
    <location>
        <begin position="157"/>
        <end position="177"/>
    </location>
</feature>
<feature type="topological domain" description="Cytoplasmic" evidence="1">
    <location>
        <begin position="178"/>
        <end position="197"/>
    </location>
</feature>
<feature type="transmembrane region" description="Helical" evidence="1">
    <location>
        <begin position="198"/>
        <end position="218"/>
    </location>
</feature>
<feature type="topological domain" description="Periplasmic" evidence="1">
    <location>
        <begin position="219"/>
        <end position="269"/>
    </location>
</feature>
<proteinExistence type="evidence at protein level"/>
<name>YFCA_ECOLI</name>
<reference key="1">
    <citation type="journal article" date="1990" name="Mol. Microbiol.">
        <title>Cloning and characterization of mepA, the structural gene of the penicillin-insensitive murein endopeptidase from Escherichia coli.</title>
        <authorList>
            <person name="Keck W."/>
            <person name="van Leeuwen A.M."/>
            <person name="Huber M."/>
            <person name="Goodell E.W."/>
        </authorList>
    </citation>
    <scope>NUCLEOTIDE SEQUENCE [GENOMIC DNA]</scope>
    <source>
        <strain>K12</strain>
    </source>
</reference>
<reference key="2">
    <citation type="journal article" date="1997" name="DNA Res.">
        <title>Construction of a contiguous 874-kb sequence of the Escherichia coli-K12 genome corresponding to 50.0-68.8 min on the linkage map and analysis of its sequence features.</title>
        <authorList>
            <person name="Yamamoto Y."/>
            <person name="Aiba H."/>
            <person name="Baba T."/>
            <person name="Hayashi K."/>
            <person name="Inada T."/>
            <person name="Isono K."/>
            <person name="Itoh T."/>
            <person name="Kimura S."/>
            <person name="Kitagawa M."/>
            <person name="Makino K."/>
            <person name="Miki T."/>
            <person name="Mitsuhashi N."/>
            <person name="Mizobuchi K."/>
            <person name="Mori H."/>
            <person name="Nakade S."/>
            <person name="Nakamura Y."/>
            <person name="Nashimoto H."/>
            <person name="Oshima T."/>
            <person name="Oyama S."/>
            <person name="Saito N."/>
            <person name="Sampei G."/>
            <person name="Satoh Y."/>
            <person name="Sivasundaram S."/>
            <person name="Tagami H."/>
            <person name="Takahashi H."/>
            <person name="Takeda J."/>
            <person name="Takemoto K."/>
            <person name="Uehara K."/>
            <person name="Wada C."/>
            <person name="Yamagata S."/>
            <person name="Horiuchi T."/>
        </authorList>
    </citation>
    <scope>NUCLEOTIDE SEQUENCE [LARGE SCALE GENOMIC DNA]</scope>
    <source>
        <strain>K12 / W3110 / ATCC 27325 / DSM 5911</strain>
    </source>
</reference>
<reference key="3">
    <citation type="journal article" date="1997" name="Science">
        <title>The complete genome sequence of Escherichia coli K-12.</title>
        <authorList>
            <person name="Blattner F.R."/>
            <person name="Plunkett G. III"/>
            <person name="Bloch C.A."/>
            <person name="Perna N.T."/>
            <person name="Burland V."/>
            <person name="Riley M."/>
            <person name="Collado-Vides J."/>
            <person name="Glasner J.D."/>
            <person name="Rode C.K."/>
            <person name="Mayhew G.F."/>
            <person name="Gregor J."/>
            <person name="Davis N.W."/>
            <person name="Kirkpatrick H.A."/>
            <person name="Goeden M.A."/>
            <person name="Rose D.J."/>
            <person name="Mau B."/>
            <person name="Shao Y."/>
        </authorList>
    </citation>
    <scope>NUCLEOTIDE SEQUENCE [LARGE SCALE GENOMIC DNA]</scope>
    <source>
        <strain>K12 / MG1655 / ATCC 47076</strain>
    </source>
</reference>
<reference key="4">
    <citation type="journal article" date="2006" name="Mol. Syst. Biol.">
        <title>Highly accurate genome sequences of Escherichia coli K-12 strains MG1655 and W3110.</title>
        <authorList>
            <person name="Hayashi K."/>
            <person name="Morooka N."/>
            <person name="Yamamoto Y."/>
            <person name="Fujita K."/>
            <person name="Isono K."/>
            <person name="Choi S."/>
            <person name="Ohtsubo E."/>
            <person name="Baba T."/>
            <person name="Wanner B.L."/>
            <person name="Mori H."/>
            <person name="Horiuchi T."/>
        </authorList>
    </citation>
    <scope>NUCLEOTIDE SEQUENCE [LARGE SCALE GENOMIC DNA]</scope>
    <source>
        <strain>K12 / W3110 / ATCC 27325 / DSM 5911</strain>
    </source>
</reference>
<reference key="5">
    <citation type="journal article" date="2005" name="Science">
        <title>Global topology analysis of the Escherichia coli inner membrane proteome.</title>
        <authorList>
            <person name="Daley D.O."/>
            <person name="Rapp M."/>
            <person name="Granseth E."/>
            <person name="Melen K."/>
            <person name="Drew D."/>
            <person name="von Heijne G."/>
        </authorList>
    </citation>
    <scope>TOPOLOGY [LARGE SCALE ANALYSIS]</scope>
    <source>
        <strain>K12 / MG1655 / ATCC 47076</strain>
    </source>
</reference>
<sequence length="269" mass="28643">METFNSLFMVSPLLLGVLFFVAMLAGFIDSIAGGGGLLTIPALMAAGMSPANALATNKLQACGGSISATIYFIRRKVVSLSDQKLNIAMTFVGSMSGALLVQYVQADVLRQILPILVICIGLYFLLMPKLGEEDRQRRMYGLPFALIAGGCVGFYDGFFGPAAGSFYALAFVTLCGFNLAKATAHAKLLNATSNIGGLLLFILGGKVIWATGFVMLVGQFLGARMGSRLVLSKGQKLIRPMIVIVSAVMSAKLLYDSHGQEILHWLGMN</sequence>
<dbReference type="EMBL" id="X16909">
    <property type="protein sequence ID" value="CAA34783.1"/>
    <property type="molecule type" value="mRNA"/>
</dbReference>
<dbReference type="EMBL" id="U00096">
    <property type="protein sequence ID" value="AAC75387.1"/>
    <property type="molecule type" value="Genomic_DNA"/>
</dbReference>
<dbReference type="EMBL" id="AP009048">
    <property type="protein sequence ID" value="BAA16183.1"/>
    <property type="molecule type" value="Genomic_DNA"/>
</dbReference>
<dbReference type="PIR" id="S08346">
    <property type="entry name" value="S08346"/>
</dbReference>
<dbReference type="RefSeq" id="NP_416830.1">
    <property type="nucleotide sequence ID" value="NC_000913.3"/>
</dbReference>
<dbReference type="RefSeq" id="WP_000447361.1">
    <property type="nucleotide sequence ID" value="NZ_SSUR01000012.1"/>
</dbReference>
<dbReference type="BioGRID" id="4259583">
    <property type="interactions" value="20"/>
</dbReference>
<dbReference type="FunCoup" id="P0AD30">
    <property type="interactions" value="288"/>
</dbReference>
<dbReference type="IntAct" id="P0AD30">
    <property type="interactions" value="2"/>
</dbReference>
<dbReference type="STRING" id="511145.b2327"/>
<dbReference type="TCDB" id="2.A.102.3.1">
    <property type="family name" value="the 4-toluene sulfonate uptake permease (tsup) family"/>
</dbReference>
<dbReference type="PaxDb" id="511145-b2327"/>
<dbReference type="EnsemblBacteria" id="AAC75387">
    <property type="protein sequence ID" value="AAC75387"/>
    <property type="gene ID" value="b2327"/>
</dbReference>
<dbReference type="GeneID" id="946808"/>
<dbReference type="KEGG" id="ecj:JW2324"/>
<dbReference type="KEGG" id="eco:b2327"/>
<dbReference type="KEGG" id="ecoc:C3026_12965"/>
<dbReference type="PATRIC" id="fig|1411691.4.peg.4405"/>
<dbReference type="EchoBASE" id="EB1134"/>
<dbReference type="eggNOG" id="COG0730">
    <property type="taxonomic scope" value="Bacteria"/>
</dbReference>
<dbReference type="HOGENOM" id="CLU_045498_2_1_6"/>
<dbReference type="InParanoid" id="P0AD30"/>
<dbReference type="OMA" id="WYFVRNG"/>
<dbReference type="OrthoDB" id="554695at2"/>
<dbReference type="PhylomeDB" id="P0AD30"/>
<dbReference type="BioCyc" id="EcoCyc:EG11144-MONOMER"/>
<dbReference type="PRO" id="PR:P0AD30"/>
<dbReference type="Proteomes" id="UP000000625">
    <property type="component" value="Chromosome"/>
</dbReference>
<dbReference type="GO" id="GO:0005886">
    <property type="term" value="C:plasma membrane"/>
    <property type="evidence" value="ECO:0000255"/>
    <property type="project" value="EcoCyc"/>
</dbReference>
<dbReference type="GO" id="GO:0009408">
    <property type="term" value="P:response to heat"/>
    <property type="evidence" value="ECO:0000315"/>
    <property type="project" value="EcoCyc"/>
</dbReference>
<dbReference type="InterPro" id="IPR002781">
    <property type="entry name" value="TM_pro_TauE-like"/>
</dbReference>
<dbReference type="InterPro" id="IPR052017">
    <property type="entry name" value="TSUP"/>
</dbReference>
<dbReference type="NCBIfam" id="NF007909">
    <property type="entry name" value="PRK10621.1"/>
    <property type="match status" value="1"/>
</dbReference>
<dbReference type="PANTHER" id="PTHR30269:SF0">
    <property type="entry name" value="MEMBRANE TRANSPORTER PROTEIN YFCA-RELATED"/>
    <property type="match status" value="1"/>
</dbReference>
<dbReference type="PANTHER" id="PTHR30269">
    <property type="entry name" value="TRANSMEMBRANE PROTEIN YFCA"/>
    <property type="match status" value="1"/>
</dbReference>
<dbReference type="Pfam" id="PF01925">
    <property type="entry name" value="TauE"/>
    <property type="match status" value="1"/>
</dbReference>
<accession>P0AD30</accession>
<accession>P14008</accession>
<comment type="subcellular location">
    <subcellularLocation>
        <location>Cell inner membrane</location>
        <topology>Multi-pass membrane protein</topology>
    </subcellularLocation>
</comment>
<comment type="similarity">
    <text evidence="2">Belongs to the 4-toluene sulfonate uptake permease (TSUP) (TC 2.A.102) family.</text>
</comment>
<protein>
    <recommendedName>
        <fullName>Probable membrane transporter protein YfcA</fullName>
    </recommendedName>
</protein>
<organism>
    <name type="scientific">Escherichia coli (strain K12)</name>
    <dbReference type="NCBI Taxonomy" id="83333"/>
    <lineage>
        <taxon>Bacteria</taxon>
        <taxon>Pseudomonadati</taxon>
        <taxon>Pseudomonadota</taxon>
        <taxon>Gammaproteobacteria</taxon>
        <taxon>Enterobacterales</taxon>
        <taxon>Enterobacteriaceae</taxon>
        <taxon>Escherichia</taxon>
    </lineage>
</organism>
<evidence type="ECO:0000255" key="1"/>
<evidence type="ECO:0000305" key="2"/>
<gene>
    <name type="primary">yfcA</name>
    <name type="ordered locus">b2327</name>
    <name type="ordered locus">JW2324</name>
</gene>